<gene>
    <name evidence="1" type="primary">argH</name>
    <name type="ordered locus">SSP1815</name>
</gene>
<reference key="1">
    <citation type="journal article" date="2005" name="Proc. Natl. Acad. Sci. U.S.A.">
        <title>Whole genome sequence of Staphylococcus saprophyticus reveals the pathogenesis of uncomplicated urinary tract infection.</title>
        <authorList>
            <person name="Kuroda M."/>
            <person name="Yamashita A."/>
            <person name="Hirakawa H."/>
            <person name="Kumano M."/>
            <person name="Morikawa K."/>
            <person name="Higashide M."/>
            <person name="Maruyama A."/>
            <person name="Inose Y."/>
            <person name="Matoba K."/>
            <person name="Toh H."/>
            <person name="Kuhara S."/>
            <person name="Hattori M."/>
            <person name="Ohta T."/>
        </authorList>
    </citation>
    <scope>NUCLEOTIDE SEQUENCE [LARGE SCALE GENOMIC DNA]</scope>
    <source>
        <strain>ATCC 15305 / DSM 20229 / NCIMB 8711 / NCTC 7292 / S-41</strain>
    </source>
</reference>
<feature type="chain" id="PRO_0000240776" description="Argininosuccinate lyase">
    <location>
        <begin position="1"/>
        <end position="459"/>
    </location>
</feature>
<proteinExistence type="inferred from homology"/>
<keyword id="KW-0028">Amino-acid biosynthesis</keyword>
<keyword id="KW-0055">Arginine biosynthesis</keyword>
<keyword id="KW-0963">Cytoplasm</keyword>
<keyword id="KW-0456">Lyase</keyword>
<keyword id="KW-1185">Reference proteome</keyword>
<protein>
    <recommendedName>
        <fullName evidence="1">Argininosuccinate lyase</fullName>
        <shortName evidence="1">ASAL</shortName>
        <ecNumber evidence="1">4.3.2.1</ecNumber>
    </recommendedName>
    <alternativeName>
        <fullName evidence="1">Arginosuccinase</fullName>
    </alternativeName>
</protein>
<comment type="catalytic activity">
    <reaction evidence="1">
        <text>2-(N(omega)-L-arginino)succinate = fumarate + L-arginine</text>
        <dbReference type="Rhea" id="RHEA:24020"/>
        <dbReference type="ChEBI" id="CHEBI:29806"/>
        <dbReference type="ChEBI" id="CHEBI:32682"/>
        <dbReference type="ChEBI" id="CHEBI:57472"/>
        <dbReference type="EC" id="4.3.2.1"/>
    </reaction>
</comment>
<comment type="pathway">
    <text evidence="1">Amino-acid biosynthesis; L-arginine biosynthesis; L-arginine from L-ornithine and carbamoyl phosphate: step 3/3.</text>
</comment>
<comment type="subcellular location">
    <subcellularLocation>
        <location evidence="1">Cytoplasm</location>
    </subcellularLocation>
</comment>
<comment type="similarity">
    <text evidence="1">Belongs to the lyase 1 family. Argininosuccinate lyase subfamily.</text>
</comment>
<name>ARLY_STAS1</name>
<accession>Q49W99</accession>
<organism>
    <name type="scientific">Staphylococcus saprophyticus subsp. saprophyticus (strain ATCC 15305 / DSM 20229 / NCIMB 8711 / NCTC 7292 / S-41)</name>
    <dbReference type="NCBI Taxonomy" id="342451"/>
    <lineage>
        <taxon>Bacteria</taxon>
        <taxon>Bacillati</taxon>
        <taxon>Bacillota</taxon>
        <taxon>Bacilli</taxon>
        <taxon>Bacillales</taxon>
        <taxon>Staphylococcaceae</taxon>
        <taxon>Staphylococcus</taxon>
    </lineage>
</organism>
<evidence type="ECO:0000255" key="1">
    <source>
        <dbReference type="HAMAP-Rule" id="MF_00006"/>
    </source>
</evidence>
<sequence length="459" mass="52097">MSNKAWGGRFSEQPEDWVDEFNASIHFDKTLIQYDVQGSIAHAKMLAKQDIITDSDCDQIIEGLNAILKDYEQDNLELDTSLEDIHLNIEHELIKRIGDAGGRLHTGRSRNDQVATDMHLYTKAEVNALIELITQFQHTIVNTAESHINTIMPGYTHLQRAQPISFAHHILTYYWMLERDKSRFQDSLKRIDISPLGAAALSGTTYPIDRHETQSLLDFSAIYENSMDAVSDRDYIVETLHNISLTMVHLSRFAEEIIFWSSAEANFITLSDAFSTGSSIMPQKKNPDMAELIRGKVGRTTGHLMSMLMTLKGLPLAYNKDMQEDKEGLFDAVHTLKGSLRIFDGMIDSMTVNVERLQQTVYNDFSNATELADYLVNKGVPFRSAHEVVGKIVLWSIQHNIYLLDVPLEQYQSANELIEADIYDYLKPENCVSRRISYGSTGQSSVQQQLDIIHKELSD</sequence>
<dbReference type="EC" id="4.3.2.1" evidence="1"/>
<dbReference type="EMBL" id="AP008934">
    <property type="protein sequence ID" value="BAE18960.1"/>
    <property type="molecule type" value="Genomic_DNA"/>
</dbReference>
<dbReference type="RefSeq" id="WP_011303510.1">
    <property type="nucleotide sequence ID" value="NZ_MTGA01000039.1"/>
</dbReference>
<dbReference type="SMR" id="Q49W99"/>
<dbReference type="GeneID" id="3616470"/>
<dbReference type="KEGG" id="ssp:SSP1815"/>
<dbReference type="PATRIC" id="fig|342451.11.peg.1811"/>
<dbReference type="eggNOG" id="COG0165">
    <property type="taxonomic scope" value="Bacteria"/>
</dbReference>
<dbReference type="HOGENOM" id="CLU_027272_2_3_9"/>
<dbReference type="OrthoDB" id="9769623at2"/>
<dbReference type="UniPathway" id="UPA00068">
    <property type="reaction ID" value="UER00114"/>
</dbReference>
<dbReference type="Proteomes" id="UP000006371">
    <property type="component" value="Chromosome"/>
</dbReference>
<dbReference type="GO" id="GO:0005829">
    <property type="term" value="C:cytosol"/>
    <property type="evidence" value="ECO:0007669"/>
    <property type="project" value="TreeGrafter"/>
</dbReference>
<dbReference type="GO" id="GO:0004056">
    <property type="term" value="F:argininosuccinate lyase activity"/>
    <property type="evidence" value="ECO:0007669"/>
    <property type="project" value="UniProtKB-UniRule"/>
</dbReference>
<dbReference type="GO" id="GO:0042450">
    <property type="term" value="P:arginine biosynthetic process via ornithine"/>
    <property type="evidence" value="ECO:0007669"/>
    <property type="project" value="InterPro"/>
</dbReference>
<dbReference type="GO" id="GO:0006526">
    <property type="term" value="P:L-arginine biosynthetic process"/>
    <property type="evidence" value="ECO:0007669"/>
    <property type="project" value="UniProtKB-UniRule"/>
</dbReference>
<dbReference type="CDD" id="cd01359">
    <property type="entry name" value="Argininosuccinate_lyase"/>
    <property type="match status" value="1"/>
</dbReference>
<dbReference type="FunFam" id="1.10.275.10:FF:000002">
    <property type="entry name" value="Argininosuccinate lyase"/>
    <property type="match status" value="1"/>
</dbReference>
<dbReference type="FunFam" id="1.10.40.30:FF:000001">
    <property type="entry name" value="Argininosuccinate lyase"/>
    <property type="match status" value="1"/>
</dbReference>
<dbReference type="FunFam" id="1.20.200.10:FF:000006">
    <property type="entry name" value="Argininosuccinate lyase"/>
    <property type="match status" value="1"/>
</dbReference>
<dbReference type="Gene3D" id="1.10.40.30">
    <property type="entry name" value="Fumarase/aspartase (C-terminal domain)"/>
    <property type="match status" value="1"/>
</dbReference>
<dbReference type="Gene3D" id="1.20.200.10">
    <property type="entry name" value="Fumarase/aspartase (Central domain)"/>
    <property type="match status" value="1"/>
</dbReference>
<dbReference type="Gene3D" id="1.10.275.10">
    <property type="entry name" value="Fumarase/aspartase (N-terminal domain)"/>
    <property type="match status" value="1"/>
</dbReference>
<dbReference type="HAMAP" id="MF_00006">
    <property type="entry name" value="Arg_succ_lyase"/>
    <property type="match status" value="1"/>
</dbReference>
<dbReference type="InterPro" id="IPR029419">
    <property type="entry name" value="Arg_succ_lyase_C"/>
</dbReference>
<dbReference type="InterPro" id="IPR009049">
    <property type="entry name" value="Argininosuccinate_lyase"/>
</dbReference>
<dbReference type="InterPro" id="IPR024083">
    <property type="entry name" value="Fumarase/histidase_N"/>
</dbReference>
<dbReference type="InterPro" id="IPR020557">
    <property type="entry name" value="Fumarate_lyase_CS"/>
</dbReference>
<dbReference type="InterPro" id="IPR000362">
    <property type="entry name" value="Fumarate_lyase_fam"/>
</dbReference>
<dbReference type="InterPro" id="IPR022761">
    <property type="entry name" value="Fumarate_lyase_N"/>
</dbReference>
<dbReference type="InterPro" id="IPR008948">
    <property type="entry name" value="L-Aspartase-like"/>
</dbReference>
<dbReference type="NCBIfam" id="TIGR00838">
    <property type="entry name" value="argH"/>
    <property type="match status" value="1"/>
</dbReference>
<dbReference type="PANTHER" id="PTHR43814">
    <property type="entry name" value="ARGININOSUCCINATE LYASE"/>
    <property type="match status" value="1"/>
</dbReference>
<dbReference type="PANTHER" id="PTHR43814:SF1">
    <property type="entry name" value="ARGININOSUCCINATE LYASE"/>
    <property type="match status" value="1"/>
</dbReference>
<dbReference type="Pfam" id="PF14698">
    <property type="entry name" value="ASL_C2"/>
    <property type="match status" value="1"/>
</dbReference>
<dbReference type="Pfam" id="PF00206">
    <property type="entry name" value="Lyase_1"/>
    <property type="match status" value="1"/>
</dbReference>
<dbReference type="PRINTS" id="PR00145">
    <property type="entry name" value="ARGSUCLYASE"/>
</dbReference>
<dbReference type="PRINTS" id="PR00149">
    <property type="entry name" value="FUMRATELYASE"/>
</dbReference>
<dbReference type="SUPFAM" id="SSF48557">
    <property type="entry name" value="L-aspartase-like"/>
    <property type="match status" value="1"/>
</dbReference>
<dbReference type="PROSITE" id="PS00163">
    <property type="entry name" value="FUMARATE_LYASES"/>
    <property type="match status" value="1"/>
</dbReference>